<name>LPOA_HISS2</name>
<accession>B0UTT2</accession>
<reference key="1">
    <citation type="submission" date="2008-02" db="EMBL/GenBank/DDBJ databases">
        <title>Complete sequence of Haemophilus somnus 2336.</title>
        <authorList>
            <consortium name="US DOE Joint Genome Institute"/>
            <person name="Siddaramappa S."/>
            <person name="Duncan A.J."/>
            <person name="Challacombe J.F."/>
            <person name="Rainey D."/>
            <person name="Gillaspy A.F."/>
            <person name="Carson M."/>
            <person name="Gipson J."/>
            <person name="Gipson M."/>
            <person name="Bruce D."/>
            <person name="Detter J.C."/>
            <person name="Han C.S."/>
            <person name="Land M."/>
            <person name="Tapia R."/>
            <person name="Thompson L.S."/>
            <person name="Orvis J."/>
            <person name="Zaitshik J."/>
            <person name="Barnes G."/>
            <person name="Brettin T.S."/>
            <person name="Dyer D.W."/>
            <person name="Inzana T.J."/>
        </authorList>
    </citation>
    <scope>NUCLEOTIDE SEQUENCE [LARGE SCALE GENOMIC DNA]</scope>
    <source>
        <strain>2336</strain>
    </source>
</reference>
<keyword id="KW-0998">Cell outer membrane</keyword>
<keyword id="KW-0133">Cell shape</keyword>
<keyword id="KW-0449">Lipoprotein</keyword>
<keyword id="KW-0472">Membrane</keyword>
<keyword id="KW-0564">Palmitate</keyword>
<keyword id="KW-0573">Peptidoglycan synthesis</keyword>
<keyword id="KW-0732">Signal</keyword>
<proteinExistence type="inferred from homology"/>
<sequence>MLSILMQGLRLKKCFLPILVMFFLAGCVNLLGSSFTASLKNDANASSDFYIRKIEQTQNQQDLQTYKLLAARVLVTENKIPQAEAYLAELIDLNDEQKLDKSLIEAHISAVKGKNETAEYQLSLIHLTSLSPSQKSRYYEIVSRIAENRHDNISAIKARIQMDNFLSDIQRKQQNNDRTWALLRNTDSEVLNNTDAEGNITLSGWLTLAQLYNDNLNQPAQLIQTLLTWKNYYPTHTAAHLLPTELQGLANFQQTTLTQVGLILPLSGNTRLIGETIKNGFDDAKVNYNVQVHVFDSMKMSIEQIINQAKKQGINTLVGPLLKQNVDVIVNNPYLVQDLNVLALNSTPNARAIEHLCYYGLSPEDEAESAASKMWNDTVRIPLVLVPQNNLGRRTAAAFTLRWQQLLGTDANIKFYNQTADINFALKSGLSESTDGVYIIANNKQLAEIKAVLDNINPTLKLYASSRSNSPNSGPEHRLFLNNLQFSDIPFFKDRESEQYKKIEKMTNNDYSLMHLYAMGYDAWLLINQFNEFRQIPGFTIDGLTGKLSAGPNCNVERDMTWFQYQNGSIYPLNEQDDSIYLINEE</sequence>
<feature type="signal peptide" evidence="1">
    <location>
        <begin position="1"/>
        <end position="26"/>
    </location>
</feature>
<feature type="chain" id="PRO_5000311053" description="Penicillin-binding protein activator LpoA">
    <location>
        <begin position="27"/>
        <end position="586"/>
    </location>
</feature>
<feature type="lipid moiety-binding region" description="N-palmitoyl cysteine" evidence="1">
    <location>
        <position position="27"/>
    </location>
</feature>
<feature type="lipid moiety-binding region" description="S-diacylglycerol cysteine" evidence="1">
    <location>
        <position position="27"/>
    </location>
</feature>
<evidence type="ECO:0000255" key="1">
    <source>
        <dbReference type="HAMAP-Rule" id="MF_01890"/>
    </source>
</evidence>
<comment type="function">
    <text evidence="1">Regulator of peptidoglycan synthesis that is essential for the function of penicillin-binding protein 1A (PBP1a).</text>
</comment>
<comment type="subunit">
    <text evidence="1">Interacts with PBP1a.</text>
</comment>
<comment type="subcellular location">
    <subcellularLocation>
        <location evidence="1">Cell outer membrane</location>
        <topology evidence="1">Lipid-anchor</topology>
        <orientation evidence="1">Periplasmic side</orientation>
    </subcellularLocation>
</comment>
<comment type="similarity">
    <text evidence="1">Belongs to the LpoA family.</text>
</comment>
<protein>
    <recommendedName>
        <fullName evidence="1">Penicillin-binding protein activator LpoA</fullName>
        <shortName evidence="1">PBP activator LpoA</shortName>
    </recommendedName>
</protein>
<organism>
    <name type="scientific">Histophilus somni (strain 2336)</name>
    <name type="common">Haemophilus somnus</name>
    <dbReference type="NCBI Taxonomy" id="228400"/>
    <lineage>
        <taxon>Bacteria</taxon>
        <taxon>Pseudomonadati</taxon>
        <taxon>Pseudomonadota</taxon>
        <taxon>Gammaproteobacteria</taxon>
        <taxon>Pasteurellales</taxon>
        <taxon>Pasteurellaceae</taxon>
        <taxon>Histophilus</taxon>
    </lineage>
</organism>
<dbReference type="EMBL" id="CP000947">
    <property type="protein sequence ID" value="ACA30931.1"/>
    <property type="molecule type" value="Genomic_DNA"/>
</dbReference>
<dbReference type="RefSeq" id="WP_012340383.1">
    <property type="nucleotide sequence ID" value="NC_010519.1"/>
</dbReference>
<dbReference type="SMR" id="B0UTT2"/>
<dbReference type="STRING" id="228400.HSM_1207"/>
<dbReference type="GeneID" id="31487510"/>
<dbReference type="KEGG" id="hsm:HSM_1207"/>
<dbReference type="HOGENOM" id="CLU_026091_1_1_6"/>
<dbReference type="GO" id="GO:0031241">
    <property type="term" value="C:periplasmic side of cell outer membrane"/>
    <property type="evidence" value="ECO:0007669"/>
    <property type="project" value="UniProtKB-UniRule"/>
</dbReference>
<dbReference type="GO" id="GO:0030234">
    <property type="term" value="F:enzyme regulator activity"/>
    <property type="evidence" value="ECO:0007669"/>
    <property type="project" value="UniProtKB-UniRule"/>
</dbReference>
<dbReference type="GO" id="GO:0009252">
    <property type="term" value="P:peptidoglycan biosynthetic process"/>
    <property type="evidence" value="ECO:0007669"/>
    <property type="project" value="UniProtKB-UniRule"/>
</dbReference>
<dbReference type="GO" id="GO:0008360">
    <property type="term" value="P:regulation of cell shape"/>
    <property type="evidence" value="ECO:0007669"/>
    <property type="project" value="UniProtKB-KW"/>
</dbReference>
<dbReference type="CDD" id="cd06339">
    <property type="entry name" value="PBP1_YraM_LppC_lipoprotein-like"/>
    <property type="match status" value="1"/>
</dbReference>
<dbReference type="Gene3D" id="1.25.40.650">
    <property type="match status" value="1"/>
</dbReference>
<dbReference type="Gene3D" id="3.40.50.2300">
    <property type="match status" value="2"/>
</dbReference>
<dbReference type="Gene3D" id="1.25.40.10">
    <property type="entry name" value="Tetratricopeptide repeat domain"/>
    <property type="match status" value="1"/>
</dbReference>
<dbReference type="HAMAP" id="MF_01890">
    <property type="entry name" value="LpoA"/>
    <property type="match status" value="1"/>
</dbReference>
<dbReference type="InterPro" id="IPR007443">
    <property type="entry name" value="LpoA"/>
</dbReference>
<dbReference type="InterPro" id="IPR028082">
    <property type="entry name" value="Peripla_BP_I"/>
</dbReference>
<dbReference type="InterPro" id="IPR011990">
    <property type="entry name" value="TPR-like_helical_dom_sf"/>
</dbReference>
<dbReference type="PANTHER" id="PTHR38038">
    <property type="entry name" value="PENICILLIN-BINDING PROTEIN ACTIVATOR LPOA"/>
    <property type="match status" value="1"/>
</dbReference>
<dbReference type="PANTHER" id="PTHR38038:SF1">
    <property type="entry name" value="PENICILLIN-BINDING PROTEIN ACTIVATOR LPOA"/>
    <property type="match status" value="1"/>
</dbReference>
<dbReference type="Pfam" id="PF04348">
    <property type="entry name" value="LppC"/>
    <property type="match status" value="1"/>
</dbReference>
<dbReference type="SUPFAM" id="SSF53822">
    <property type="entry name" value="Periplasmic binding protein-like I"/>
    <property type="match status" value="1"/>
</dbReference>
<gene>
    <name evidence="1" type="primary">lpoA</name>
    <name type="ordered locus">HSM_1207</name>
</gene>